<gene>
    <name evidence="1" type="primary">hemL</name>
    <name type="ordered locus">DIP0409</name>
</gene>
<comment type="catalytic activity">
    <reaction evidence="1">
        <text>(S)-4-amino-5-oxopentanoate = 5-aminolevulinate</text>
        <dbReference type="Rhea" id="RHEA:14265"/>
        <dbReference type="ChEBI" id="CHEBI:57501"/>
        <dbReference type="ChEBI" id="CHEBI:356416"/>
        <dbReference type="EC" id="5.4.3.8"/>
    </reaction>
</comment>
<comment type="cofactor">
    <cofactor evidence="1">
        <name>pyridoxal 5'-phosphate</name>
        <dbReference type="ChEBI" id="CHEBI:597326"/>
    </cofactor>
</comment>
<comment type="pathway">
    <text evidence="1">Porphyrin-containing compound metabolism; protoporphyrin-IX biosynthesis; 5-aminolevulinate from L-glutamyl-tRNA(Glu): step 2/2.</text>
</comment>
<comment type="subunit">
    <text evidence="1">Homodimer.</text>
</comment>
<comment type="subcellular location">
    <subcellularLocation>
        <location evidence="1">Cytoplasm</location>
    </subcellularLocation>
</comment>
<comment type="similarity">
    <text evidence="1">Belongs to the class-III pyridoxal-phosphate-dependent aminotransferase family. HemL subfamily.</text>
</comment>
<sequence length="430" mass="45362">MTSTQRSQELFARAQQFTPGGVNSPVRAFGSVGGHARFIQSAKGSKLYDVDGNEYVDLVCSWGPMLLGNAHPEIVEAVQKAATNGLSFGAPTEAEVKIAEMIVDRTSVEEVRMVNSGTEATMSAVRLARGFTGRPKVIKFDGCYHGHVDALLASAGSGVATFALPDSPGVTGASAADTIVVPYNDSEAVRAAFEAHPDQIACVIAEAAAGNMGTVAPQDNFNAKLKEVAHEHGALLILDEVMTGFRTSYNGWYGVDGVAGDLTTFGKVISGGLPAAAFGGRADIMRYLAPEGPVYQAGTLSGNPVAMAAGMKSLELATPEVYDMVRANADRLAGLLHEALDREGVAHHIQRAATMLSVRFAEGEGHNFDDMKAADTFRFPAFFHALLDNGIYASPSVFETWFVSAALTDDDFDKIEKALRPAAQAAGKAK</sequence>
<organism>
    <name type="scientific">Corynebacterium diphtheriae (strain ATCC 700971 / NCTC 13129 / Biotype gravis)</name>
    <dbReference type="NCBI Taxonomy" id="257309"/>
    <lineage>
        <taxon>Bacteria</taxon>
        <taxon>Bacillati</taxon>
        <taxon>Actinomycetota</taxon>
        <taxon>Actinomycetes</taxon>
        <taxon>Mycobacteriales</taxon>
        <taxon>Corynebacteriaceae</taxon>
        <taxon>Corynebacterium</taxon>
    </lineage>
</organism>
<keyword id="KW-0963">Cytoplasm</keyword>
<keyword id="KW-0413">Isomerase</keyword>
<keyword id="KW-0627">Porphyrin biosynthesis</keyword>
<keyword id="KW-0663">Pyridoxal phosphate</keyword>
<keyword id="KW-1185">Reference proteome</keyword>
<protein>
    <recommendedName>
        <fullName evidence="1">Glutamate-1-semialdehyde 2,1-aminomutase</fullName>
        <shortName evidence="1">GSA</shortName>
        <ecNumber evidence="1">5.4.3.8</ecNumber>
    </recommendedName>
    <alternativeName>
        <fullName evidence="1">Glutamate-1-semialdehyde aminotransferase</fullName>
        <shortName evidence="1">GSA-AT</shortName>
    </alternativeName>
</protein>
<evidence type="ECO:0000255" key="1">
    <source>
        <dbReference type="HAMAP-Rule" id="MF_00375"/>
    </source>
</evidence>
<proteinExistence type="inferred from homology"/>
<reference key="1">
    <citation type="journal article" date="2003" name="Nucleic Acids Res.">
        <title>The complete genome sequence and analysis of Corynebacterium diphtheriae NCTC13129.</title>
        <authorList>
            <person name="Cerdeno-Tarraga A.-M."/>
            <person name="Efstratiou A."/>
            <person name="Dover L.G."/>
            <person name="Holden M.T.G."/>
            <person name="Pallen M.J."/>
            <person name="Bentley S.D."/>
            <person name="Besra G.S."/>
            <person name="Churcher C.M."/>
            <person name="James K.D."/>
            <person name="De Zoysa A."/>
            <person name="Chillingworth T."/>
            <person name="Cronin A."/>
            <person name="Dowd L."/>
            <person name="Feltwell T."/>
            <person name="Hamlin N."/>
            <person name="Holroyd S."/>
            <person name="Jagels K."/>
            <person name="Moule S."/>
            <person name="Quail M.A."/>
            <person name="Rabbinowitsch E."/>
            <person name="Rutherford K.M."/>
            <person name="Thomson N.R."/>
            <person name="Unwin L."/>
            <person name="Whitehead S."/>
            <person name="Barrell B.G."/>
            <person name="Parkhill J."/>
        </authorList>
    </citation>
    <scope>NUCLEOTIDE SEQUENCE [LARGE SCALE GENOMIC DNA]</scope>
    <source>
        <strain>ATCC 700971 / NCTC 13129 / Biotype gravis</strain>
    </source>
</reference>
<feature type="chain" id="PRO_0000120404" description="Glutamate-1-semialdehyde 2,1-aminomutase">
    <location>
        <begin position="1"/>
        <end position="430"/>
    </location>
</feature>
<feature type="modified residue" description="N6-(pyridoxal phosphate)lysine" evidence="1">
    <location>
        <position position="267"/>
    </location>
</feature>
<name>GSA_CORDI</name>
<accession>Q6NJJ2</accession>
<dbReference type="EC" id="5.4.3.8" evidence="1"/>
<dbReference type="EMBL" id="BX248355">
    <property type="protein sequence ID" value="CAE48913.1"/>
    <property type="molecule type" value="Genomic_DNA"/>
</dbReference>
<dbReference type="RefSeq" id="WP_010934280.1">
    <property type="nucleotide sequence ID" value="NC_002935.2"/>
</dbReference>
<dbReference type="SMR" id="Q6NJJ2"/>
<dbReference type="STRING" id="257309.DIP0409"/>
<dbReference type="KEGG" id="cdi:DIP0409"/>
<dbReference type="HOGENOM" id="CLU_016922_1_5_11"/>
<dbReference type="UniPathway" id="UPA00251">
    <property type="reaction ID" value="UER00317"/>
</dbReference>
<dbReference type="Proteomes" id="UP000002198">
    <property type="component" value="Chromosome"/>
</dbReference>
<dbReference type="GO" id="GO:0005737">
    <property type="term" value="C:cytoplasm"/>
    <property type="evidence" value="ECO:0007669"/>
    <property type="project" value="UniProtKB-SubCell"/>
</dbReference>
<dbReference type="GO" id="GO:0042286">
    <property type="term" value="F:glutamate-1-semialdehyde 2,1-aminomutase activity"/>
    <property type="evidence" value="ECO:0007669"/>
    <property type="project" value="UniProtKB-UniRule"/>
</dbReference>
<dbReference type="GO" id="GO:0030170">
    <property type="term" value="F:pyridoxal phosphate binding"/>
    <property type="evidence" value="ECO:0007669"/>
    <property type="project" value="InterPro"/>
</dbReference>
<dbReference type="GO" id="GO:0008483">
    <property type="term" value="F:transaminase activity"/>
    <property type="evidence" value="ECO:0007669"/>
    <property type="project" value="InterPro"/>
</dbReference>
<dbReference type="GO" id="GO:0006782">
    <property type="term" value="P:protoporphyrinogen IX biosynthetic process"/>
    <property type="evidence" value="ECO:0007669"/>
    <property type="project" value="UniProtKB-UniRule"/>
</dbReference>
<dbReference type="CDD" id="cd00610">
    <property type="entry name" value="OAT_like"/>
    <property type="match status" value="1"/>
</dbReference>
<dbReference type="FunFam" id="3.40.640.10:FF:000021">
    <property type="entry name" value="Glutamate-1-semialdehyde 2,1-aminomutase"/>
    <property type="match status" value="1"/>
</dbReference>
<dbReference type="Gene3D" id="3.90.1150.10">
    <property type="entry name" value="Aspartate Aminotransferase, domain 1"/>
    <property type="match status" value="1"/>
</dbReference>
<dbReference type="Gene3D" id="3.40.640.10">
    <property type="entry name" value="Type I PLP-dependent aspartate aminotransferase-like (Major domain)"/>
    <property type="match status" value="1"/>
</dbReference>
<dbReference type="HAMAP" id="MF_00375">
    <property type="entry name" value="HemL_aminotrans_3"/>
    <property type="match status" value="1"/>
</dbReference>
<dbReference type="InterPro" id="IPR004639">
    <property type="entry name" value="4pyrrol_synth_GluAld_NH2Trfase"/>
</dbReference>
<dbReference type="InterPro" id="IPR005814">
    <property type="entry name" value="Aminotrans_3"/>
</dbReference>
<dbReference type="InterPro" id="IPR049704">
    <property type="entry name" value="Aminotrans_3_PPA_site"/>
</dbReference>
<dbReference type="InterPro" id="IPR015424">
    <property type="entry name" value="PyrdxlP-dep_Trfase"/>
</dbReference>
<dbReference type="InterPro" id="IPR015421">
    <property type="entry name" value="PyrdxlP-dep_Trfase_major"/>
</dbReference>
<dbReference type="InterPro" id="IPR015422">
    <property type="entry name" value="PyrdxlP-dep_Trfase_small"/>
</dbReference>
<dbReference type="NCBIfam" id="TIGR00713">
    <property type="entry name" value="hemL"/>
    <property type="match status" value="1"/>
</dbReference>
<dbReference type="NCBIfam" id="NF000818">
    <property type="entry name" value="PRK00062.1"/>
    <property type="match status" value="1"/>
</dbReference>
<dbReference type="PANTHER" id="PTHR43713">
    <property type="entry name" value="GLUTAMATE-1-SEMIALDEHYDE 2,1-AMINOMUTASE"/>
    <property type="match status" value="1"/>
</dbReference>
<dbReference type="PANTHER" id="PTHR43713:SF3">
    <property type="entry name" value="GLUTAMATE-1-SEMIALDEHYDE 2,1-AMINOMUTASE 1, CHLOROPLASTIC-RELATED"/>
    <property type="match status" value="1"/>
</dbReference>
<dbReference type="Pfam" id="PF00202">
    <property type="entry name" value="Aminotran_3"/>
    <property type="match status" value="1"/>
</dbReference>
<dbReference type="SUPFAM" id="SSF53383">
    <property type="entry name" value="PLP-dependent transferases"/>
    <property type="match status" value="1"/>
</dbReference>
<dbReference type="PROSITE" id="PS00600">
    <property type="entry name" value="AA_TRANSFER_CLASS_3"/>
    <property type="match status" value="1"/>
</dbReference>